<feature type="chain" id="PRO_1000094111" description="Ribonuclease 3">
    <location>
        <begin position="1"/>
        <end position="230"/>
    </location>
</feature>
<feature type="domain" description="RNase III" evidence="1">
    <location>
        <begin position="5"/>
        <end position="125"/>
    </location>
</feature>
<feature type="domain" description="DRBM" evidence="1">
    <location>
        <begin position="153"/>
        <end position="223"/>
    </location>
</feature>
<feature type="active site" evidence="1">
    <location>
        <position position="44"/>
    </location>
</feature>
<feature type="active site" evidence="1">
    <location>
        <position position="114"/>
    </location>
</feature>
<feature type="binding site" evidence="1">
    <location>
        <position position="40"/>
    </location>
    <ligand>
        <name>Mg(2+)</name>
        <dbReference type="ChEBI" id="CHEBI:18420"/>
    </ligand>
</feature>
<feature type="binding site" evidence="1">
    <location>
        <position position="111"/>
    </location>
    <ligand>
        <name>Mg(2+)</name>
        <dbReference type="ChEBI" id="CHEBI:18420"/>
    </ligand>
</feature>
<feature type="binding site" evidence="1">
    <location>
        <position position="114"/>
    </location>
    <ligand>
        <name>Mg(2+)</name>
        <dbReference type="ChEBI" id="CHEBI:18420"/>
    </ligand>
</feature>
<accession>B2SFY4</accession>
<comment type="function">
    <text evidence="1">Digests double-stranded RNA. Involved in the processing of primary rRNA transcript to yield the immediate precursors to the large and small rRNAs (23S and 16S). Processes some mRNAs, and tRNAs when they are encoded in the rRNA operon. Processes pre-crRNA and tracrRNA of type II CRISPR loci if present in the organism.</text>
</comment>
<comment type="catalytic activity">
    <reaction evidence="1">
        <text>Endonucleolytic cleavage to 5'-phosphomonoester.</text>
        <dbReference type="EC" id="3.1.26.3"/>
    </reaction>
</comment>
<comment type="cofactor">
    <cofactor evidence="1">
        <name>Mg(2+)</name>
        <dbReference type="ChEBI" id="CHEBI:18420"/>
    </cofactor>
</comment>
<comment type="subunit">
    <text evidence="1">Homodimer.</text>
</comment>
<comment type="subcellular location">
    <subcellularLocation>
        <location evidence="1">Cytoplasm</location>
    </subcellularLocation>
</comment>
<comment type="similarity">
    <text evidence="1">Belongs to the ribonuclease III family.</text>
</comment>
<reference key="1">
    <citation type="journal article" date="2009" name="PLoS Pathog.">
        <title>Molecular evolutionary consequences of niche restriction in Francisella tularensis, a facultative intracellular pathogen.</title>
        <authorList>
            <person name="Larsson P."/>
            <person name="Elfsmark D."/>
            <person name="Svensson K."/>
            <person name="Wikstroem P."/>
            <person name="Forsman M."/>
            <person name="Brettin T."/>
            <person name="Keim P."/>
            <person name="Johansson A."/>
        </authorList>
    </citation>
    <scope>NUCLEOTIDE SEQUENCE [LARGE SCALE GENOMIC DNA]</scope>
    <source>
        <strain>FSC147</strain>
    </source>
</reference>
<dbReference type="EC" id="3.1.26.3" evidence="1"/>
<dbReference type="EMBL" id="CP000915">
    <property type="protein sequence ID" value="ACD30394.1"/>
    <property type="molecule type" value="Genomic_DNA"/>
</dbReference>
<dbReference type="SMR" id="B2SFY4"/>
<dbReference type="KEGG" id="ftm:FTM_0344"/>
<dbReference type="HOGENOM" id="CLU_000907_1_1_6"/>
<dbReference type="GO" id="GO:0005737">
    <property type="term" value="C:cytoplasm"/>
    <property type="evidence" value="ECO:0007669"/>
    <property type="project" value="UniProtKB-SubCell"/>
</dbReference>
<dbReference type="GO" id="GO:0003725">
    <property type="term" value="F:double-stranded RNA binding"/>
    <property type="evidence" value="ECO:0007669"/>
    <property type="project" value="TreeGrafter"/>
</dbReference>
<dbReference type="GO" id="GO:0046872">
    <property type="term" value="F:metal ion binding"/>
    <property type="evidence" value="ECO:0007669"/>
    <property type="project" value="UniProtKB-KW"/>
</dbReference>
<dbReference type="GO" id="GO:0004525">
    <property type="term" value="F:ribonuclease III activity"/>
    <property type="evidence" value="ECO:0007669"/>
    <property type="project" value="UniProtKB-UniRule"/>
</dbReference>
<dbReference type="GO" id="GO:0019843">
    <property type="term" value="F:rRNA binding"/>
    <property type="evidence" value="ECO:0007669"/>
    <property type="project" value="UniProtKB-KW"/>
</dbReference>
<dbReference type="GO" id="GO:0006397">
    <property type="term" value="P:mRNA processing"/>
    <property type="evidence" value="ECO:0007669"/>
    <property type="project" value="UniProtKB-UniRule"/>
</dbReference>
<dbReference type="GO" id="GO:0010468">
    <property type="term" value="P:regulation of gene expression"/>
    <property type="evidence" value="ECO:0007669"/>
    <property type="project" value="TreeGrafter"/>
</dbReference>
<dbReference type="GO" id="GO:0006364">
    <property type="term" value="P:rRNA processing"/>
    <property type="evidence" value="ECO:0007669"/>
    <property type="project" value="UniProtKB-UniRule"/>
</dbReference>
<dbReference type="GO" id="GO:0008033">
    <property type="term" value="P:tRNA processing"/>
    <property type="evidence" value="ECO:0007669"/>
    <property type="project" value="UniProtKB-KW"/>
</dbReference>
<dbReference type="CDD" id="cd10845">
    <property type="entry name" value="DSRM_RNAse_III_family"/>
    <property type="match status" value="1"/>
</dbReference>
<dbReference type="CDD" id="cd00593">
    <property type="entry name" value="RIBOc"/>
    <property type="match status" value="1"/>
</dbReference>
<dbReference type="FunFam" id="1.10.1520.10:FF:000001">
    <property type="entry name" value="Ribonuclease 3"/>
    <property type="match status" value="1"/>
</dbReference>
<dbReference type="Gene3D" id="3.30.160.20">
    <property type="match status" value="1"/>
</dbReference>
<dbReference type="Gene3D" id="1.10.1520.10">
    <property type="entry name" value="Ribonuclease III domain"/>
    <property type="match status" value="1"/>
</dbReference>
<dbReference type="HAMAP" id="MF_00104">
    <property type="entry name" value="RNase_III"/>
    <property type="match status" value="1"/>
</dbReference>
<dbReference type="InterPro" id="IPR014720">
    <property type="entry name" value="dsRBD_dom"/>
</dbReference>
<dbReference type="InterPro" id="IPR011907">
    <property type="entry name" value="RNase_III"/>
</dbReference>
<dbReference type="InterPro" id="IPR000999">
    <property type="entry name" value="RNase_III_dom"/>
</dbReference>
<dbReference type="InterPro" id="IPR036389">
    <property type="entry name" value="RNase_III_sf"/>
</dbReference>
<dbReference type="NCBIfam" id="TIGR02191">
    <property type="entry name" value="RNaseIII"/>
    <property type="match status" value="1"/>
</dbReference>
<dbReference type="PANTHER" id="PTHR11207:SF0">
    <property type="entry name" value="RIBONUCLEASE 3"/>
    <property type="match status" value="1"/>
</dbReference>
<dbReference type="PANTHER" id="PTHR11207">
    <property type="entry name" value="RIBONUCLEASE III"/>
    <property type="match status" value="1"/>
</dbReference>
<dbReference type="Pfam" id="PF00035">
    <property type="entry name" value="dsrm"/>
    <property type="match status" value="1"/>
</dbReference>
<dbReference type="Pfam" id="PF14622">
    <property type="entry name" value="Ribonucleas_3_3"/>
    <property type="match status" value="1"/>
</dbReference>
<dbReference type="SMART" id="SM00358">
    <property type="entry name" value="DSRM"/>
    <property type="match status" value="1"/>
</dbReference>
<dbReference type="SMART" id="SM00535">
    <property type="entry name" value="RIBOc"/>
    <property type="match status" value="1"/>
</dbReference>
<dbReference type="SUPFAM" id="SSF54768">
    <property type="entry name" value="dsRNA-binding domain-like"/>
    <property type="match status" value="1"/>
</dbReference>
<dbReference type="SUPFAM" id="SSF69065">
    <property type="entry name" value="RNase III domain-like"/>
    <property type="match status" value="1"/>
</dbReference>
<dbReference type="PROSITE" id="PS50137">
    <property type="entry name" value="DS_RBD"/>
    <property type="match status" value="1"/>
</dbReference>
<dbReference type="PROSITE" id="PS00517">
    <property type="entry name" value="RNASE_3_1"/>
    <property type="match status" value="1"/>
</dbReference>
<dbReference type="PROSITE" id="PS50142">
    <property type="entry name" value="RNASE_3_2"/>
    <property type="match status" value="1"/>
</dbReference>
<keyword id="KW-0963">Cytoplasm</keyword>
<keyword id="KW-0255">Endonuclease</keyword>
<keyword id="KW-0378">Hydrolase</keyword>
<keyword id="KW-0460">Magnesium</keyword>
<keyword id="KW-0479">Metal-binding</keyword>
<keyword id="KW-0507">mRNA processing</keyword>
<keyword id="KW-0540">Nuclease</keyword>
<keyword id="KW-0694">RNA-binding</keyword>
<keyword id="KW-0698">rRNA processing</keyword>
<keyword id="KW-0699">rRNA-binding</keyword>
<keyword id="KW-0819">tRNA processing</keyword>
<sequence length="230" mass="26227">MVPEYSRFYNILGYNFKDYTLLIRALTHRSKTKKNYERLEFLGDSVLSFVIAEVLYKQFTDLAEGKLSQLRSKLVKGTTLAQLASSLKMDEYIILGASEQGGHKREKILEDVFEAVIGAIYLDSDFATVKKVILKWYQPIISSINLDTIKVKDSKSKLQEILLQNALSLPEYSIETIDGKDHEQQFTVVAVSKDLNLRVKAQGTSRKKAEQKTAEKMIEMLSQQGLHEKK</sequence>
<name>RNC_FRATM</name>
<proteinExistence type="inferred from homology"/>
<gene>
    <name evidence="1" type="primary">rnc</name>
    <name type="ordered locus">FTM_0344</name>
</gene>
<organism>
    <name type="scientific">Francisella tularensis subsp. mediasiatica (strain FSC147)</name>
    <dbReference type="NCBI Taxonomy" id="441952"/>
    <lineage>
        <taxon>Bacteria</taxon>
        <taxon>Pseudomonadati</taxon>
        <taxon>Pseudomonadota</taxon>
        <taxon>Gammaproteobacteria</taxon>
        <taxon>Thiotrichales</taxon>
        <taxon>Francisellaceae</taxon>
        <taxon>Francisella</taxon>
    </lineage>
</organism>
<protein>
    <recommendedName>
        <fullName evidence="1">Ribonuclease 3</fullName>
        <ecNumber evidence="1">3.1.26.3</ecNumber>
    </recommendedName>
    <alternativeName>
        <fullName evidence="1">Ribonuclease III</fullName>
        <shortName evidence="1">RNase III</shortName>
    </alternativeName>
</protein>
<evidence type="ECO:0000255" key="1">
    <source>
        <dbReference type="HAMAP-Rule" id="MF_00104"/>
    </source>
</evidence>